<accession>Q8NFV5</accession>
<accession>Q9NTH5</accession>
<organism>
    <name type="scientific">Homo sapiens</name>
    <name type="common">Human</name>
    <dbReference type="NCBI Taxonomy" id="9606"/>
    <lineage>
        <taxon>Eukaryota</taxon>
        <taxon>Metazoa</taxon>
        <taxon>Chordata</taxon>
        <taxon>Craniata</taxon>
        <taxon>Vertebrata</taxon>
        <taxon>Euteleostomi</taxon>
        <taxon>Mammalia</taxon>
        <taxon>Eutheria</taxon>
        <taxon>Euarchontoglires</taxon>
        <taxon>Primates</taxon>
        <taxon>Haplorrhini</taxon>
        <taxon>Catarrhini</taxon>
        <taxon>Hominidae</taxon>
        <taxon>Homo</taxon>
    </lineage>
</organism>
<proteinExistence type="evidence at transcript level"/>
<feature type="chain" id="PRO_0000322594" description="Speedy protein E1">
    <location>
        <begin position="1"/>
        <end position="336"/>
    </location>
</feature>
<feature type="region of interest" description="Disordered" evidence="1">
    <location>
        <begin position="16"/>
        <end position="50"/>
    </location>
</feature>
<feature type="compositionally biased region" description="Acidic residues" evidence="1">
    <location>
        <begin position="36"/>
        <end position="50"/>
    </location>
</feature>
<feature type="sequence conflict" description="In Ref. 1; AAM62309." evidence="4" ref="1">
    <original>T</original>
    <variation>M</variation>
    <location>
        <position position="58"/>
    </location>
</feature>
<feature type="sequence conflict" description="In Ref. 1; AAM62309." evidence="4" ref="1">
    <original>L</original>
    <variation>P</variation>
    <location>
        <position position="76"/>
    </location>
</feature>
<protein>
    <recommendedName>
        <fullName evidence="4">Speedy protein E1</fullName>
    </recommendedName>
    <alternativeName>
        <fullName>Williams-Beuren syndrome chromosomal region 19 protein</fullName>
    </alternativeName>
</protein>
<evidence type="ECO:0000256" key="1">
    <source>
        <dbReference type="SAM" id="MobiDB-lite"/>
    </source>
</evidence>
<evidence type="ECO:0000269" key="2">
    <source>
    </source>
</evidence>
<evidence type="ECO:0000269" key="3">
    <source>
    </source>
</evidence>
<evidence type="ECO:0000305" key="4"/>
<evidence type="ECO:0000312" key="5">
    <source>
        <dbReference type="HGNC" id="HGNC:16408"/>
    </source>
</evidence>
<dbReference type="EMBL" id="AF412027">
    <property type="protein sequence ID" value="AAM62309.1"/>
    <property type="molecule type" value="mRNA"/>
</dbReference>
<dbReference type="EMBL" id="AC004951">
    <property type="status" value="NOT_ANNOTATED_CDS"/>
    <property type="molecule type" value="Genomic_DNA"/>
</dbReference>
<dbReference type="EMBL" id="AL137266">
    <property type="protein sequence ID" value="CAB70665.1"/>
    <property type="molecule type" value="mRNA"/>
</dbReference>
<dbReference type="CCDS" id="CCDS5475.1"/>
<dbReference type="PIR" id="T46338">
    <property type="entry name" value="T46338"/>
</dbReference>
<dbReference type="RefSeq" id="NP_778234.2">
    <property type="nucleotide sequence ID" value="NM_175064.2"/>
</dbReference>
<dbReference type="SMR" id="Q8NFV5"/>
<dbReference type="BioGRID" id="130254">
    <property type="interactions" value="5"/>
</dbReference>
<dbReference type="FunCoup" id="Q8NFV5">
    <property type="interactions" value="158"/>
</dbReference>
<dbReference type="STRING" id="9606.ENSP00000258704"/>
<dbReference type="iPTMnet" id="Q8NFV5"/>
<dbReference type="PhosphoSitePlus" id="Q8NFV5"/>
<dbReference type="BioMuta" id="SPDYE1"/>
<dbReference type="DMDM" id="296452952"/>
<dbReference type="MassIVE" id="Q8NFV5"/>
<dbReference type="PaxDb" id="9606-ENSP00000258704"/>
<dbReference type="PeptideAtlas" id="Q8NFV5"/>
<dbReference type="Antibodypedia" id="66743">
    <property type="antibodies" value="84 antibodies from 15 providers"/>
</dbReference>
<dbReference type="DNASU" id="285955"/>
<dbReference type="Ensembl" id="ENST00000258704.3">
    <property type="protein sequence ID" value="ENSP00000258704.3"/>
    <property type="gene ID" value="ENSG00000136206.5"/>
</dbReference>
<dbReference type="GeneID" id="285955"/>
<dbReference type="KEGG" id="hsa:285955"/>
<dbReference type="UCSC" id="uc003tjf.4">
    <property type="organism name" value="human"/>
</dbReference>
<dbReference type="AGR" id="HGNC:16408"/>
<dbReference type="CTD" id="285955"/>
<dbReference type="GeneCards" id="SPDYE1"/>
<dbReference type="HGNC" id="HGNC:16408">
    <property type="gene designation" value="SPDYE1"/>
</dbReference>
<dbReference type="HPA" id="ENSG00000136206">
    <property type="expression patterns" value="Tissue enriched (testis)"/>
</dbReference>
<dbReference type="MIM" id="617623">
    <property type="type" value="gene"/>
</dbReference>
<dbReference type="neXtProt" id="NX_Q8NFV5"/>
<dbReference type="PharmGKB" id="PA38135"/>
<dbReference type="VEuPathDB" id="HostDB:ENSG00000136206"/>
<dbReference type="eggNOG" id="ENOG502SSQN">
    <property type="taxonomic scope" value="Eukaryota"/>
</dbReference>
<dbReference type="GeneTree" id="ENSGT00940000154173"/>
<dbReference type="HOGENOM" id="CLU_070353_0_0_1"/>
<dbReference type="InParanoid" id="Q8NFV5"/>
<dbReference type="OrthoDB" id="9536938at2759"/>
<dbReference type="PAN-GO" id="Q8NFV5">
    <property type="GO annotations" value="1 GO annotation based on evolutionary models"/>
</dbReference>
<dbReference type="PhylomeDB" id="Q8NFV5"/>
<dbReference type="TreeFam" id="TF329827"/>
<dbReference type="PathwayCommons" id="Q8NFV5"/>
<dbReference type="BioGRID-ORCS" id="285955">
    <property type="hits" value="433 hits in 1068 CRISPR screens"/>
</dbReference>
<dbReference type="GenomeRNAi" id="285955"/>
<dbReference type="Pharos" id="Q8NFV5">
    <property type="development level" value="Tdark"/>
</dbReference>
<dbReference type="PRO" id="PR:Q8NFV5"/>
<dbReference type="Proteomes" id="UP000005640">
    <property type="component" value="Chromosome 7"/>
</dbReference>
<dbReference type="RNAct" id="Q8NFV5">
    <property type="molecule type" value="protein"/>
</dbReference>
<dbReference type="Bgee" id="ENSG00000136206">
    <property type="expression patterns" value="Expressed in male germ line stem cell (sensu Vertebrata) in testis and 99 other cell types or tissues"/>
</dbReference>
<dbReference type="ExpressionAtlas" id="Q8NFV5">
    <property type="expression patterns" value="baseline and differential"/>
</dbReference>
<dbReference type="GO" id="GO:0019901">
    <property type="term" value="F:protein kinase binding"/>
    <property type="evidence" value="ECO:0000318"/>
    <property type="project" value="GO_Central"/>
</dbReference>
<dbReference type="InterPro" id="IPR020984">
    <property type="entry name" value="Speedy"/>
</dbReference>
<dbReference type="PANTHER" id="PTHR31156">
    <property type="entry name" value="WBSCR19-LIKE PROTEIN"/>
    <property type="match status" value="1"/>
</dbReference>
<dbReference type="Pfam" id="PF11357">
    <property type="entry name" value="Spy1"/>
    <property type="match status" value="2"/>
</dbReference>
<name>SPDE1_HUMAN</name>
<sequence length="336" mass="40668">MQKHYTVAWFLYSAPGVDPSPPCRSLGWKRKREWSDESEEEPEKELAPEPEETWVVETLCGLKMKLKQQRVSPILLEHHKDFNSQLAPGVDPSPPHRSFCWKRKMEWWDKSEESEEEPRKVLAPEPEEIWVAEMLCGLKMKLKRRRVSLVLPEHHEAFNRLLEDPVIKRFLAWDKDLRVSDKYLLAMVIAYFSRAGFPSWQYQRLHFFLALYLANDMEEDDEDSKQNIFHFLYGKNRSRIPLLRKRRFQLYRSMNPRARKNRSHIPLVRKRRFQLRRCMNPRARKNRSQIVLFQKRRFHFFCSMSCRAWVSPEELEEIQAYDPEHWVWARDRARLS</sequence>
<reference key="1">
    <citation type="journal article" date="2002" name="Hum. Genet.">
        <title>Identification of additional transcripts in the Williams-Beuren syndrome critical region.</title>
        <authorList>
            <person name="Merla G."/>
            <person name="Ucla C."/>
            <person name="Guipponi M."/>
            <person name="Reymond A."/>
        </authorList>
    </citation>
    <scope>NUCLEOTIDE SEQUENCE [MRNA]</scope>
    <scope>POSSIBLE INVOLVEMENT IN WBS</scope>
</reference>
<reference key="2">
    <citation type="journal article" date="2003" name="Nature">
        <title>The DNA sequence of human chromosome 7.</title>
        <authorList>
            <person name="Hillier L.W."/>
            <person name="Fulton R.S."/>
            <person name="Fulton L.A."/>
            <person name="Graves T.A."/>
            <person name="Pepin K.H."/>
            <person name="Wagner-McPherson C."/>
            <person name="Layman D."/>
            <person name="Maas J."/>
            <person name="Jaeger S."/>
            <person name="Walker R."/>
            <person name="Wylie K."/>
            <person name="Sekhon M."/>
            <person name="Becker M.C."/>
            <person name="O'Laughlin M.D."/>
            <person name="Schaller M.E."/>
            <person name="Fewell G.A."/>
            <person name="Delehaunty K.D."/>
            <person name="Miner T.L."/>
            <person name="Nash W.E."/>
            <person name="Cordes M."/>
            <person name="Du H."/>
            <person name="Sun H."/>
            <person name="Edwards J."/>
            <person name="Bradshaw-Cordum H."/>
            <person name="Ali J."/>
            <person name="Andrews S."/>
            <person name="Isak A."/>
            <person name="Vanbrunt A."/>
            <person name="Nguyen C."/>
            <person name="Du F."/>
            <person name="Lamar B."/>
            <person name="Courtney L."/>
            <person name="Kalicki J."/>
            <person name="Ozersky P."/>
            <person name="Bielicki L."/>
            <person name="Scott K."/>
            <person name="Holmes A."/>
            <person name="Harkins R."/>
            <person name="Harris A."/>
            <person name="Strong C.M."/>
            <person name="Hou S."/>
            <person name="Tomlinson C."/>
            <person name="Dauphin-Kohlberg S."/>
            <person name="Kozlowicz-Reilly A."/>
            <person name="Leonard S."/>
            <person name="Rohlfing T."/>
            <person name="Rock S.M."/>
            <person name="Tin-Wollam A.-M."/>
            <person name="Abbott A."/>
            <person name="Minx P."/>
            <person name="Maupin R."/>
            <person name="Strowmatt C."/>
            <person name="Latreille P."/>
            <person name="Miller N."/>
            <person name="Johnson D."/>
            <person name="Murray J."/>
            <person name="Woessner J.P."/>
            <person name="Wendl M.C."/>
            <person name="Yang S.-P."/>
            <person name="Schultz B.R."/>
            <person name="Wallis J.W."/>
            <person name="Spieth J."/>
            <person name="Bieri T.A."/>
            <person name="Nelson J.O."/>
            <person name="Berkowicz N."/>
            <person name="Wohldmann P.E."/>
            <person name="Cook L.L."/>
            <person name="Hickenbotham M.T."/>
            <person name="Eldred J."/>
            <person name="Williams D."/>
            <person name="Bedell J.A."/>
            <person name="Mardis E.R."/>
            <person name="Clifton S.W."/>
            <person name="Chissoe S.L."/>
            <person name="Marra M.A."/>
            <person name="Raymond C."/>
            <person name="Haugen E."/>
            <person name="Gillett W."/>
            <person name="Zhou Y."/>
            <person name="James R."/>
            <person name="Phelps K."/>
            <person name="Iadanoto S."/>
            <person name="Bubb K."/>
            <person name="Simms E."/>
            <person name="Levy R."/>
            <person name="Clendenning J."/>
            <person name="Kaul R."/>
            <person name="Kent W.J."/>
            <person name="Furey T.S."/>
            <person name="Baertsch R.A."/>
            <person name="Brent M.R."/>
            <person name="Keibler E."/>
            <person name="Flicek P."/>
            <person name="Bork P."/>
            <person name="Suyama M."/>
            <person name="Bailey J.A."/>
            <person name="Portnoy M.E."/>
            <person name="Torrents D."/>
            <person name="Chinwalla A.T."/>
            <person name="Gish W.R."/>
            <person name="Eddy S.R."/>
            <person name="McPherson J.D."/>
            <person name="Olson M.V."/>
            <person name="Eichler E.E."/>
            <person name="Green E.D."/>
            <person name="Waterston R.H."/>
            <person name="Wilson R.K."/>
        </authorList>
    </citation>
    <scope>NUCLEOTIDE SEQUENCE [LARGE SCALE GENOMIC DNA]</scope>
</reference>
<reference key="3">
    <citation type="journal article" date="2007" name="BMC Genomics">
        <title>The full-ORF clone resource of the German cDNA consortium.</title>
        <authorList>
            <person name="Bechtel S."/>
            <person name="Rosenfelder H."/>
            <person name="Duda A."/>
            <person name="Schmidt C.P."/>
            <person name="Ernst U."/>
            <person name="Wellenreuther R."/>
            <person name="Mehrle A."/>
            <person name="Schuster C."/>
            <person name="Bahr A."/>
            <person name="Bloecker H."/>
            <person name="Heubner D."/>
            <person name="Hoerlein A."/>
            <person name="Michel G."/>
            <person name="Wedler H."/>
            <person name="Koehrer K."/>
            <person name="Ottenwaelder B."/>
            <person name="Poustka A."/>
            <person name="Wiemann S."/>
            <person name="Schupp I."/>
        </authorList>
    </citation>
    <scope>NUCLEOTIDE SEQUENCE [LARGE SCALE MRNA] OF 29-336</scope>
    <source>
        <tissue>Testis</tissue>
    </source>
</reference>
<reference key="4">
    <citation type="journal article" date="2012" name="Cell. Mol. Life Sci.">
        <title>Evolution of the Cdk-activator Speedy/RINGO in vertebrates.</title>
        <authorList>
            <person name="Chauhan S."/>
            <person name="Zheng X."/>
            <person name="Tan Y.Y."/>
            <person name="Tay B.H."/>
            <person name="Lim S."/>
            <person name="Venkatesh B."/>
            <person name="Kaldis P."/>
        </authorList>
    </citation>
    <scope>TISSUE SPECIFICITY</scope>
</reference>
<gene>
    <name evidence="5" type="primary">SPDYE1</name>
    <name type="synonym">WBSCR19</name>
</gene>
<comment type="tissue specificity">
    <text evidence="3">Predominantly expressed in testis and heart.</text>
</comment>
<comment type="disease">
    <text evidence="2">SPDYE1 is located in the Williams-Beuren syndrome (WBS) critical region. WBS results from a hemizygous deletion of several genes on chromosome 7q11.23, thought to arise as a consequence of unequal crossing over between highly homologous low-copy repeat sequences flanking the deleted region (PubMed:12073013).</text>
</comment>
<comment type="similarity">
    <text evidence="4">Belongs to the Speedy/Ringo family.</text>
</comment>
<keyword id="KW-1185">Reference proteome</keyword>
<keyword id="KW-0856">Williams-Beuren syndrome</keyword>